<gene>
    <name type="primary">NAC002</name>
    <name type="synonym">ATAF1</name>
    <name type="ordered locus">At1g01720</name>
    <name type="ORF">T1N6.12</name>
</gene>
<sequence>MSELLQLPPGFRFHPTDEELVMHYLCRKCASQSIAVPIIAEIDLYKYDPWELPGLALYGEKEWYFFSPRDRKYPNGSRPNRSAGSGYWKATGADKPIGLPKPVGIKKALVFYAGKAPKGEKTNWIMHEYRLADVDRSVRKKKNSLRLDDWVLCRIYNKKGATERRGPPPPVVYGDEIMEEKPKVTEMVMPPPPQQTSEFAYFDTSDSVPKLHTTDSSCSEQVVSPEFTSEVQSEPKWKDWSAVSNDNNNTLDFGFNYIDATVDNAFGGGGSSNQMFPLQDMFMYMQKPY</sequence>
<keyword id="KW-0238">DNA-binding</keyword>
<keyword id="KW-0539">Nucleus</keyword>
<keyword id="KW-1185">Reference proteome</keyword>
<keyword id="KW-0804">Transcription</keyword>
<keyword id="KW-0805">Transcription regulation</keyword>
<proteinExistence type="evidence at protein level"/>
<reference key="1">
    <citation type="submission" date="1993-08" db="EMBL/GenBank/DDBJ databases">
        <authorList>
            <person name="Rueth J."/>
            <person name="Schweyen R."/>
            <person name="Hirt H."/>
        </authorList>
    </citation>
    <scope>NUCLEOTIDE SEQUENCE [MRNA]</scope>
</reference>
<reference key="2">
    <citation type="journal article" date="2000" name="Nature">
        <title>Sequence and analysis of chromosome 1 of the plant Arabidopsis thaliana.</title>
        <authorList>
            <person name="Theologis A."/>
            <person name="Ecker J.R."/>
            <person name="Palm C.J."/>
            <person name="Federspiel N.A."/>
            <person name="Kaul S."/>
            <person name="White O."/>
            <person name="Alonso J."/>
            <person name="Altafi H."/>
            <person name="Araujo R."/>
            <person name="Bowman C.L."/>
            <person name="Brooks S.Y."/>
            <person name="Buehler E."/>
            <person name="Chan A."/>
            <person name="Chao Q."/>
            <person name="Chen H."/>
            <person name="Cheuk R.F."/>
            <person name="Chin C.W."/>
            <person name="Chung M.K."/>
            <person name="Conn L."/>
            <person name="Conway A.B."/>
            <person name="Conway A.R."/>
            <person name="Creasy T.H."/>
            <person name="Dewar K."/>
            <person name="Dunn P."/>
            <person name="Etgu P."/>
            <person name="Feldblyum T.V."/>
            <person name="Feng J.-D."/>
            <person name="Fong B."/>
            <person name="Fujii C.Y."/>
            <person name="Gill J.E."/>
            <person name="Goldsmith A.D."/>
            <person name="Haas B."/>
            <person name="Hansen N.F."/>
            <person name="Hughes B."/>
            <person name="Huizar L."/>
            <person name="Hunter J.L."/>
            <person name="Jenkins J."/>
            <person name="Johnson-Hopson C."/>
            <person name="Khan S."/>
            <person name="Khaykin E."/>
            <person name="Kim C.J."/>
            <person name="Koo H.L."/>
            <person name="Kremenetskaia I."/>
            <person name="Kurtz D.B."/>
            <person name="Kwan A."/>
            <person name="Lam B."/>
            <person name="Langin-Hooper S."/>
            <person name="Lee A."/>
            <person name="Lee J.M."/>
            <person name="Lenz C.A."/>
            <person name="Li J.H."/>
            <person name="Li Y.-P."/>
            <person name="Lin X."/>
            <person name="Liu S.X."/>
            <person name="Liu Z.A."/>
            <person name="Luros J.S."/>
            <person name="Maiti R."/>
            <person name="Marziali A."/>
            <person name="Militscher J."/>
            <person name="Miranda M."/>
            <person name="Nguyen M."/>
            <person name="Nierman W.C."/>
            <person name="Osborne B.I."/>
            <person name="Pai G."/>
            <person name="Peterson J."/>
            <person name="Pham P.K."/>
            <person name="Rizzo M."/>
            <person name="Rooney T."/>
            <person name="Rowley D."/>
            <person name="Sakano H."/>
            <person name="Salzberg S.L."/>
            <person name="Schwartz J.R."/>
            <person name="Shinn P."/>
            <person name="Southwick A.M."/>
            <person name="Sun H."/>
            <person name="Tallon L.J."/>
            <person name="Tambunga G."/>
            <person name="Toriumi M.J."/>
            <person name="Town C.D."/>
            <person name="Utterback T."/>
            <person name="Van Aken S."/>
            <person name="Vaysberg M."/>
            <person name="Vysotskaia V.S."/>
            <person name="Walker M."/>
            <person name="Wu D."/>
            <person name="Yu G."/>
            <person name="Fraser C.M."/>
            <person name="Venter J.C."/>
            <person name="Davis R.W."/>
        </authorList>
    </citation>
    <scope>NUCLEOTIDE SEQUENCE [LARGE SCALE GENOMIC DNA]</scope>
    <source>
        <strain>cv. Columbia</strain>
    </source>
</reference>
<reference key="3">
    <citation type="journal article" date="2017" name="Plant J.">
        <title>Araport11: a complete reannotation of the Arabidopsis thaliana reference genome.</title>
        <authorList>
            <person name="Cheng C.Y."/>
            <person name="Krishnakumar V."/>
            <person name="Chan A.P."/>
            <person name="Thibaud-Nissen F."/>
            <person name="Schobel S."/>
            <person name="Town C.D."/>
        </authorList>
    </citation>
    <scope>GENOME REANNOTATION</scope>
    <source>
        <strain>cv. Columbia</strain>
    </source>
</reference>
<reference key="4">
    <citation type="journal article" date="2003" name="Science">
        <title>Empirical analysis of transcriptional activity in the Arabidopsis genome.</title>
        <authorList>
            <person name="Yamada K."/>
            <person name="Lim J."/>
            <person name="Dale J.M."/>
            <person name="Chen H."/>
            <person name="Shinn P."/>
            <person name="Palm C.J."/>
            <person name="Southwick A.M."/>
            <person name="Wu H.C."/>
            <person name="Kim C.J."/>
            <person name="Nguyen M."/>
            <person name="Pham P.K."/>
            <person name="Cheuk R.F."/>
            <person name="Karlin-Newmann G."/>
            <person name="Liu S.X."/>
            <person name="Lam B."/>
            <person name="Sakano H."/>
            <person name="Wu T."/>
            <person name="Yu G."/>
            <person name="Miranda M."/>
            <person name="Quach H.L."/>
            <person name="Tripp M."/>
            <person name="Chang C.H."/>
            <person name="Lee J.M."/>
            <person name="Toriumi M.J."/>
            <person name="Chan M.M."/>
            <person name="Tang C.C."/>
            <person name="Onodera C.S."/>
            <person name="Deng J.M."/>
            <person name="Akiyama K."/>
            <person name="Ansari Y."/>
            <person name="Arakawa T."/>
            <person name="Banh J."/>
            <person name="Banno F."/>
            <person name="Bowser L."/>
            <person name="Brooks S.Y."/>
            <person name="Carninci P."/>
            <person name="Chao Q."/>
            <person name="Choy N."/>
            <person name="Enju A."/>
            <person name="Goldsmith A.D."/>
            <person name="Gurjal M."/>
            <person name="Hansen N.F."/>
            <person name="Hayashizaki Y."/>
            <person name="Johnson-Hopson C."/>
            <person name="Hsuan V.W."/>
            <person name="Iida K."/>
            <person name="Karnes M."/>
            <person name="Khan S."/>
            <person name="Koesema E."/>
            <person name="Ishida J."/>
            <person name="Jiang P.X."/>
            <person name="Jones T."/>
            <person name="Kawai J."/>
            <person name="Kamiya A."/>
            <person name="Meyers C."/>
            <person name="Nakajima M."/>
            <person name="Narusaka M."/>
            <person name="Seki M."/>
            <person name="Sakurai T."/>
            <person name="Satou M."/>
            <person name="Tamse R."/>
            <person name="Vaysberg M."/>
            <person name="Wallender E.K."/>
            <person name="Wong C."/>
            <person name="Yamamura Y."/>
            <person name="Yuan S."/>
            <person name="Shinozaki K."/>
            <person name="Davis R.W."/>
            <person name="Theologis A."/>
            <person name="Ecker J.R."/>
        </authorList>
    </citation>
    <scope>NUCLEOTIDE SEQUENCE [LARGE SCALE MRNA]</scope>
    <source>
        <strain>cv. Columbia</strain>
    </source>
</reference>
<reference key="5">
    <citation type="journal article" date="2003" name="DNA Res.">
        <title>Comprehensive analysis of NAC family genes in Oryza sativa and Arabidopsis thaliana.</title>
        <authorList>
            <person name="Ooka H."/>
            <person name="Satoh K."/>
            <person name="Doi K."/>
            <person name="Nagata T."/>
            <person name="Otomo Y."/>
            <person name="Murakami K."/>
            <person name="Matsubara K."/>
            <person name="Osato N."/>
            <person name="Kawai J."/>
            <person name="Carninci P."/>
            <person name="Hayashizaki Y."/>
            <person name="Suzuki K."/>
            <person name="Kojima K."/>
            <person name="Takahara Y."/>
            <person name="Yamamoto K."/>
            <person name="Kikuchi S."/>
        </authorList>
    </citation>
    <scope>GENE FAMILY</scope>
    <scope>NOMENCLATURE</scope>
</reference>
<reference key="6">
    <citation type="journal article" date="2009" name="Plant Sci.">
        <title>NAC domain transcription factor ATAF1 interacts with SNF1-related kinases and silencing of its subfamily causes severe developmental defects in Arabidopsis.</title>
        <authorList>
            <person name="Kleinow T."/>
            <person name="Himbert S."/>
            <person name="Krenz B."/>
            <person name="Jeske H."/>
            <person name="Koncz C."/>
        </authorList>
    </citation>
    <scope>INTERACTION WITH KIN10 AND KIN11</scope>
</reference>
<evidence type="ECO:0000255" key="1">
    <source>
        <dbReference type="PROSITE-ProRule" id="PRU00353"/>
    </source>
</evidence>
<evidence type="ECO:0000269" key="2">
    <source ref="6"/>
</evidence>
<evidence type="ECO:0000305" key="3"/>
<comment type="subunit">
    <text evidence="2">Interacts with KIN10 and KIN11.</text>
</comment>
<comment type="subcellular location">
    <subcellularLocation>
        <location evidence="1">Nucleus</location>
    </subcellularLocation>
</comment>
<comment type="domain">
    <text>The NAC domain includes a DNA-binding domain and a dimerization domain.</text>
</comment>
<comment type="sequence caution" evidence="3">
    <conflict type="erroneous initiation">
        <sequence resource="EMBL-CDS" id="CAA52771"/>
    </conflict>
    <text>Truncated N-terminus.</text>
</comment>
<organism>
    <name type="scientific">Arabidopsis thaliana</name>
    <name type="common">Mouse-ear cress</name>
    <dbReference type="NCBI Taxonomy" id="3702"/>
    <lineage>
        <taxon>Eukaryota</taxon>
        <taxon>Viridiplantae</taxon>
        <taxon>Streptophyta</taxon>
        <taxon>Embryophyta</taxon>
        <taxon>Tracheophyta</taxon>
        <taxon>Spermatophyta</taxon>
        <taxon>Magnoliopsida</taxon>
        <taxon>eudicotyledons</taxon>
        <taxon>Gunneridae</taxon>
        <taxon>Pentapetalae</taxon>
        <taxon>rosids</taxon>
        <taxon>malvids</taxon>
        <taxon>Brassicales</taxon>
        <taxon>Brassicaceae</taxon>
        <taxon>Camelineae</taxon>
        <taxon>Arabidopsis</taxon>
    </lineage>
</organism>
<protein>
    <recommendedName>
        <fullName>NAC domain-containing protein 2</fullName>
        <shortName>ANAC002</shortName>
    </recommendedName>
</protein>
<name>NAC2_ARATH</name>
<dbReference type="EMBL" id="X74755">
    <property type="protein sequence ID" value="CAA52771.1"/>
    <property type="status" value="ALT_INIT"/>
    <property type="molecule type" value="mRNA"/>
</dbReference>
<dbReference type="EMBL" id="AC009273">
    <property type="protein sequence ID" value="AAF78403.1"/>
    <property type="molecule type" value="Genomic_DNA"/>
</dbReference>
<dbReference type="EMBL" id="CP002684">
    <property type="protein sequence ID" value="AEE27326.1"/>
    <property type="molecule type" value="Genomic_DNA"/>
</dbReference>
<dbReference type="EMBL" id="AF370617">
    <property type="protein sequence ID" value="AAK43936.1"/>
    <property type="molecule type" value="mRNA"/>
</dbReference>
<dbReference type="PIR" id="E86148">
    <property type="entry name" value="E86148"/>
</dbReference>
<dbReference type="PIR" id="S37101">
    <property type="entry name" value="S37101"/>
</dbReference>
<dbReference type="RefSeq" id="NP_171677.1">
    <property type="nucleotide sequence ID" value="NM_100054.3"/>
</dbReference>
<dbReference type="SMR" id="Q39013"/>
<dbReference type="BioGRID" id="24500">
    <property type="interactions" value="10"/>
</dbReference>
<dbReference type="FunCoup" id="Q39013">
    <property type="interactions" value="685"/>
</dbReference>
<dbReference type="STRING" id="3702.Q39013"/>
<dbReference type="PaxDb" id="3702-AT1G01720.1"/>
<dbReference type="ProteomicsDB" id="251077"/>
<dbReference type="EnsemblPlants" id="AT1G01720.1">
    <property type="protein sequence ID" value="AT1G01720.1"/>
    <property type="gene ID" value="AT1G01720"/>
</dbReference>
<dbReference type="GeneID" id="839265"/>
<dbReference type="Gramene" id="AT1G01720.1">
    <property type="protein sequence ID" value="AT1G01720.1"/>
    <property type="gene ID" value="AT1G01720"/>
</dbReference>
<dbReference type="KEGG" id="ath:AT1G01720"/>
<dbReference type="Araport" id="AT1G01720"/>
<dbReference type="TAIR" id="AT1G01720">
    <property type="gene designation" value="ATAF1"/>
</dbReference>
<dbReference type="eggNOG" id="ENOG502QVRF">
    <property type="taxonomic scope" value="Eukaryota"/>
</dbReference>
<dbReference type="HOGENOM" id="CLU_035664_3_1_1"/>
<dbReference type="InParanoid" id="Q39013"/>
<dbReference type="OMA" id="KMNTTCY"/>
<dbReference type="OrthoDB" id="1921961at2759"/>
<dbReference type="PhylomeDB" id="Q39013"/>
<dbReference type="PRO" id="PR:Q39013"/>
<dbReference type="Proteomes" id="UP000006548">
    <property type="component" value="Chromosome 1"/>
</dbReference>
<dbReference type="ExpressionAtlas" id="Q39013">
    <property type="expression patterns" value="baseline and differential"/>
</dbReference>
<dbReference type="GO" id="GO:0005634">
    <property type="term" value="C:nucleus"/>
    <property type="evidence" value="ECO:0007669"/>
    <property type="project" value="UniProtKB-SubCell"/>
</dbReference>
<dbReference type="GO" id="GO:0003700">
    <property type="term" value="F:DNA-binding transcription factor activity"/>
    <property type="evidence" value="ECO:0000250"/>
    <property type="project" value="TAIR"/>
</dbReference>
<dbReference type="GO" id="GO:0019900">
    <property type="term" value="F:kinase binding"/>
    <property type="evidence" value="ECO:0000353"/>
    <property type="project" value="UniProtKB"/>
</dbReference>
<dbReference type="GO" id="GO:0000976">
    <property type="term" value="F:transcription cis-regulatory region binding"/>
    <property type="evidence" value="ECO:0000353"/>
    <property type="project" value="TAIR"/>
</dbReference>
<dbReference type="GO" id="GO:0071456">
    <property type="term" value="P:cellular response to hypoxia"/>
    <property type="evidence" value="ECO:0007007"/>
    <property type="project" value="TAIR"/>
</dbReference>
<dbReference type="GO" id="GO:0009788">
    <property type="term" value="P:negative regulation of abscisic acid-activated signaling pathway"/>
    <property type="evidence" value="ECO:0000315"/>
    <property type="project" value="TAIR"/>
</dbReference>
<dbReference type="GO" id="GO:0009611">
    <property type="term" value="P:response to wounding"/>
    <property type="evidence" value="ECO:0000270"/>
    <property type="project" value="TAIR"/>
</dbReference>
<dbReference type="FunFam" id="2.170.150.80:FF:000004">
    <property type="entry name" value="NAC transcription factor"/>
    <property type="match status" value="1"/>
</dbReference>
<dbReference type="Gene3D" id="2.170.150.80">
    <property type="entry name" value="NAC domain"/>
    <property type="match status" value="1"/>
</dbReference>
<dbReference type="InterPro" id="IPR003441">
    <property type="entry name" value="NAC-dom"/>
</dbReference>
<dbReference type="InterPro" id="IPR036093">
    <property type="entry name" value="NAC_dom_sf"/>
</dbReference>
<dbReference type="PANTHER" id="PTHR31719:SF183">
    <property type="entry name" value="NAC DOMAIN-CONTAINING PROTEIN 2"/>
    <property type="match status" value="1"/>
</dbReference>
<dbReference type="PANTHER" id="PTHR31719">
    <property type="entry name" value="NAC TRANSCRIPTION FACTOR 56"/>
    <property type="match status" value="1"/>
</dbReference>
<dbReference type="Pfam" id="PF02365">
    <property type="entry name" value="NAM"/>
    <property type="match status" value="1"/>
</dbReference>
<dbReference type="SUPFAM" id="SSF101941">
    <property type="entry name" value="NAC domain"/>
    <property type="match status" value="1"/>
</dbReference>
<dbReference type="PROSITE" id="PS51005">
    <property type="entry name" value="NAC"/>
    <property type="match status" value="1"/>
</dbReference>
<feature type="chain" id="PRO_0000132306" description="NAC domain-containing protein 2">
    <location>
        <begin position="1"/>
        <end position="289"/>
    </location>
</feature>
<feature type="domain" description="NAC" evidence="1">
    <location>
        <begin position="7"/>
        <end position="158"/>
    </location>
</feature>
<accession>Q39013</accession>
<accession>Q9LQ85</accession>